<evidence type="ECO:0000250" key="1"/>
<evidence type="ECO:0000250" key="2">
    <source>
        <dbReference type="UniProtKB" id="Q9ERC1"/>
    </source>
</evidence>
<evidence type="ECO:0000250" key="3">
    <source>
        <dbReference type="UniProtKB" id="Q9Y6X6"/>
    </source>
</evidence>
<evidence type="ECO:0000255" key="4"/>
<evidence type="ECO:0000255" key="5">
    <source>
        <dbReference type="PROSITE-ProRule" id="PRU00116"/>
    </source>
</evidence>
<evidence type="ECO:0000255" key="6">
    <source>
        <dbReference type="PROSITE-ProRule" id="PRU00782"/>
    </source>
</evidence>
<evidence type="ECO:0000256" key="7">
    <source>
        <dbReference type="SAM" id="MobiDB-lite"/>
    </source>
</evidence>
<evidence type="ECO:0000269" key="8">
    <source>
    </source>
</evidence>
<evidence type="ECO:0000269" key="9">
    <source>
    </source>
</evidence>
<evidence type="ECO:0000269" key="10">
    <source>
    </source>
</evidence>
<evidence type="ECO:0000269" key="11">
    <source ref="4"/>
</evidence>
<evidence type="ECO:0000303" key="12">
    <source>
    </source>
</evidence>
<evidence type="ECO:0000303" key="13">
    <source>
    </source>
</evidence>
<evidence type="ECO:0000305" key="14"/>
<evidence type="ECO:0000312" key="15">
    <source>
        <dbReference type="EMBL" id="AAH72580.1"/>
    </source>
</evidence>
<evidence type="ECO:0000312" key="16">
    <source>
        <dbReference type="EMBL" id="BAC38475.1"/>
    </source>
</evidence>
<evidence type="ECO:0000312" key="17">
    <source>
        <dbReference type="EMBL" id="BAD90419.1"/>
    </source>
</evidence>
<evidence type="ECO:0000312" key="18">
    <source>
        <dbReference type="MGI" id="MGI:2685951"/>
    </source>
</evidence>
<reference key="1">
    <citation type="journal article" date="2011" name="EMBO J.">
        <title>NYAP: a phosphoprotein family that links PI3K to WAVE1 signalling in neurons.</title>
        <authorList>
            <person name="Yokoyama K."/>
            <person name="Tezuka T."/>
            <person name="Kotani M."/>
            <person name="Nakazawa T."/>
            <person name="Hoshina N."/>
            <person name="Shimoda Y."/>
            <person name="Kakuta S."/>
            <person name="Sudo K."/>
            <person name="Watanabe K."/>
            <person name="Iwakura Y."/>
            <person name="Yamamoto T."/>
        </authorList>
    </citation>
    <scope>NUCLEOTIDE SEQUENCE [MRNA] (ISOFORM 3)</scope>
    <scope>FUNCTION</scope>
    <scope>INTERACTION WITH ACOT9; ARHGAP26; CYFIP1; NCKAP1 AND PIK3R2</scope>
    <scope>SUBUNIT</scope>
    <scope>TISSUE SPECIFICITY</scope>
    <scope>DEVELOPMENTAL STAGE</scope>
    <scope>DISRUPTION PHENOTYPE</scope>
    <scope>PHOSPHORYLATION</scope>
    <scope>MUTAGENESIS OF TYR-1416 AND TYR-1441</scope>
    <source>
        <tissue>Brain</tissue>
    </source>
</reference>
<reference evidence="14 15" key="2">
    <citation type="journal article" date="2004" name="Genome Res.">
        <title>The status, quality, and expansion of the NIH full-length cDNA project: the Mammalian Gene Collection (MGC).</title>
        <authorList>
            <consortium name="The MGC Project Team"/>
        </authorList>
    </citation>
    <scope>NUCLEOTIDE SEQUENCE [LARGE SCALE MRNA] (ISOFORMS 1 AND 2)</scope>
    <source>
        <strain evidence="15">C57BL/6J</strain>
        <tissue evidence="15">Brain</tissue>
        <tissue>Testis</tissue>
    </source>
</reference>
<reference evidence="14 16" key="3">
    <citation type="journal article" date="2005" name="Science">
        <title>The transcriptional landscape of the mammalian genome.</title>
        <authorList>
            <person name="Carninci P."/>
            <person name="Kasukawa T."/>
            <person name="Katayama S."/>
            <person name="Gough J."/>
            <person name="Frith M.C."/>
            <person name="Maeda N."/>
            <person name="Oyama R."/>
            <person name="Ravasi T."/>
            <person name="Lenhard B."/>
            <person name="Wells C."/>
            <person name="Kodzius R."/>
            <person name="Shimokawa K."/>
            <person name="Bajic V.B."/>
            <person name="Brenner S.E."/>
            <person name="Batalov S."/>
            <person name="Forrest A.R."/>
            <person name="Zavolan M."/>
            <person name="Davis M.J."/>
            <person name="Wilming L.G."/>
            <person name="Aidinis V."/>
            <person name="Allen J.E."/>
            <person name="Ambesi-Impiombato A."/>
            <person name="Apweiler R."/>
            <person name="Aturaliya R.N."/>
            <person name="Bailey T.L."/>
            <person name="Bansal M."/>
            <person name="Baxter L."/>
            <person name="Beisel K.W."/>
            <person name="Bersano T."/>
            <person name="Bono H."/>
            <person name="Chalk A.M."/>
            <person name="Chiu K.P."/>
            <person name="Choudhary V."/>
            <person name="Christoffels A."/>
            <person name="Clutterbuck D.R."/>
            <person name="Crowe M.L."/>
            <person name="Dalla E."/>
            <person name="Dalrymple B.P."/>
            <person name="de Bono B."/>
            <person name="Della Gatta G."/>
            <person name="di Bernardo D."/>
            <person name="Down T."/>
            <person name="Engstrom P."/>
            <person name="Fagiolini M."/>
            <person name="Faulkner G."/>
            <person name="Fletcher C.F."/>
            <person name="Fukushima T."/>
            <person name="Furuno M."/>
            <person name="Futaki S."/>
            <person name="Gariboldi M."/>
            <person name="Georgii-Hemming P."/>
            <person name="Gingeras T.R."/>
            <person name="Gojobori T."/>
            <person name="Green R.E."/>
            <person name="Gustincich S."/>
            <person name="Harbers M."/>
            <person name="Hayashi Y."/>
            <person name="Hensch T.K."/>
            <person name="Hirokawa N."/>
            <person name="Hill D."/>
            <person name="Huminiecki L."/>
            <person name="Iacono M."/>
            <person name="Ikeo K."/>
            <person name="Iwama A."/>
            <person name="Ishikawa T."/>
            <person name="Jakt M."/>
            <person name="Kanapin A."/>
            <person name="Katoh M."/>
            <person name="Kawasawa Y."/>
            <person name="Kelso J."/>
            <person name="Kitamura H."/>
            <person name="Kitano H."/>
            <person name="Kollias G."/>
            <person name="Krishnan S.P."/>
            <person name="Kruger A."/>
            <person name="Kummerfeld S.K."/>
            <person name="Kurochkin I.V."/>
            <person name="Lareau L.F."/>
            <person name="Lazarevic D."/>
            <person name="Lipovich L."/>
            <person name="Liu J."/>
            <person name="Liuni S."/>
            <person name="McWilliam S."/>
            <person name="Madan Babu M."/>
            <person name="Madera M."/>
            <person name="Marchionni L."/>
            <person name="Matsuda H."/>
            <person name="Matsuzawa S."/>
            <person name="Miki H."/>
            <person name="Mignone F."/>
            <person name="Miyake S."/>
            <person name="Morris K."/>
            <person name="Mottagui-Tabar S."/>
            <person name="Mulder N."/>
            <person name="Nakano N."/>
            <person name="Nakauchi H."/>
            <person name="Ng P."/>
            <person name="Nilsson R."/>
            <person name="Nishiguchi S."/>
            <person name="Nishikawa S."/>
            <person name="Nori F."/>
            <person name="Ohara O."/>
            <person name="Okazaki Y."/>
            <person name="Orlando V."/>
            <person name="Pang K.C."/>
            <person name="Pavan W.J."/>
            <person name="Pavesi G."/>
            <person name="Pesole G."/>
            <person name="Petrovsky N."/>
            <person name="Piazza S."/>
            <person name="Reed J."/>
            <person name="Reid J.F."/>
            <person name="Ring B.Z."/>
            <person name="Ringwald M."/>
            <person name="Rost B."/>
            <person name="Ruan Y."/>
            <person name="Salzberg S.L."/>
            <person name="Sandelin A."/>
            <person name="Schneider C."/>
            <person name="Schoenbach C."/>
            <person name="Sekiguchi K."/>
            <person name="Semple C.A."/>
            <person name="Seno S."/>
            <person name="Sessa L."/>
            <person name="Sheng Y."/>
            <person name="Shibata Y."/>
            <person name="Shimada H."/>
            <person name="Shimada K."/>
            <person name="Silva D."/>
            <person name="Sinclair B."/>
            <person name="Sperling S."/>
            <person name="Stupka E."/>
            <person name="Sugiura K."/>
            <person name="Sultana R."/>
            <person name="Takenaka Y."/>
            <person name="Taki K."/>
            <person name="Tammoja K."/>
            <person name="Tan S.L."/>
            <person name="Tang S."/>
            <person name="Taylor M.S."/>
            <person name="Tegner J."/>
            <person name="Teichmann S.A."/>
            <person name="Ueda H.R."/>
            <person name="van Nimwegen E."/>
            <person name="Verardo R."/>
            <person name="Wei C.L."/>
            <person name="Yagi K."/>
            <person name="Yamanishi H."/>
            <person name="Zabarovsky E."/>
            <person name="Zhu S."/>
            <person name="Zimmer A."/>
            <person name="Hide W."/>
            <person name="Bult C."/>
            <person name="Grimmond S.M."/>
            <person name="Teasdale R.D."/>
            <person name="Liu E.T."/>
            <person name="Brusic V."/>
            <person name="Quackenbush J."/>
            <person name="Wahlestedt C."/>
            <person name="Mattick J.S."/>
            <person name="Hume D.A."/>
            <person name="Kai C."/>
            <person name="Sasaki D."/>
            <person name="Tomaru Y."/>
            <person name="Fukuda S."/>
            <person name="Kanamori-Katayama M."/>
            <person name="Suzuki M."/>
            <person name="Aoki J."/>
            <person name="Arakawa T."/>
            <person name="Iida J."/>
            <person name="Imamura K."/>
            <person name="Itoh M."/>
            <person name="Kato T."/>
            <person name="Kawaji H."/>
            <person name="Kawagashira N."/>
            <person name="Kawashima T."/>
            <person name="Kojima M."/>
            <person name="Kondo S."/>
            <person name="Konno H."/>
            <person name="Nakano K."/>
            <person name="Ninomiya N."/>
            <person name="Nishio T."/>
            <person name="Okada M."/>
            <person name="Plessy C."/>
            <person name="Shibata K."/>
            <person name="Shiraki T."/>
            <person name="Suzuki S."/>
            <person name="Tagami M."/>
            <person name="Waki K."/>
            <person name="Watahiki A."/>
            <person name="Okamura-Oho Y."/>
            <person name="Suzuki H."/>
            <person name="Kawai J."/>
            <person name="Hayashizaki Y."/>
        </authorList>
    </citation>
    <scope>NUCLEOTIDE SEQUENCE [LARGE SCALE MRNA] OF 1-992 (ISOFORM 1)</scope>
    <source>
        <strain evidence="16">C57BL/6J</strain>
        <tissue evidence="16">Cerebellum</tissue>
    </source>
</reference>
<reference evidence="14 17" key="4">
    <citation type="submission" date="2005-02" db="EMBL/GenBank/DDBJ databases">
        <title>Prediction of the coding sequences of mouse homologues of KIAA gene. The complete nucleotide sequences of mouse KIAA-homologous cDNAs identified by screening of terminal sequences of cDNA clones randomly sampled from size-fractionated libraries.</title>
        <authorList>
            <person name="Okazaki N."/>
            <person name="Kikuno R.F."/>
            <person name="Ohara R."/>
            <person name="Inamoto S."/>
            <person name="Nagase T."/>
            <person name="Ohara O."/>
            <person name="Koga H."/>
        </authorList>
    </citation>
    <scope>NUCLEOTIDE SEQUENCE [LARGE SCALE MRNA] OF 736-1919</scope>
    <source>
        <tissue evidence="17">Fetal brain</tissue>
    </source>
</reference>
<reference key="5">
    <citation type="journal article" date="2008" name="J. Proteome Res.">
        <title>Large-scale identification and evolution indexing of tyrosine phosphorylation sites from murine brain.</title>
        <authorList>
            <person name="Ballif B.A."/>
            <person name="Carey G.R."/>
            <person name="Sunyaev S.R."/>
            <person name="Gygi S.P."/>
        </authorList>
    </citation>
    <scope>IDENTIFICATION BY MASS SPECTROMETRY [LARGE SCALE ANALYSIS]</scope>
    <source>
        <tissue>Brain</tissue>
    </source>
</reference>
<sequence>MEIDQCLLESLPLGQRQRLVKRMRCEQIKAYYEREKVFQKQEGPLKRSKPGKRQKVRFGLADMIQDAVIHHHDKEVLQLLKEGADPHTLVSSGGSLLHLCARYDNVFIAEVLIDRGVNVNHQDEDFWTPMHIACACDNPDIVLLLILAGANVFLQDVNGNIPLDYAVEGTESSAILLAYLDEKGVDLSSLRQIKLQRPLSMLTDVRHFLSSGGDVNEKNDDGVTLLHMACASGYKEVVLLLLEHGGDLNGTDDRYWTPLHLAAKYGQTTLVKLLLAHQANPHLVNCNGEKPSDIAASESIEEMLLKAEIAWEEKMKESPSAPSLAQEELYEILHDLPDLSSKLSPLVLPIAKQDSLLEKDIMFKDTTKGLCKQESQDGPPETSMTSNCGKPEQVQVMPPAPSDDLATLSELNDSSLLYEIQKRFGNDQIHTFIGDIFLLVNPFKELPIYSTMVSQMYLSPTGQRSPSLPPHLFSCAERAFHRLFQERKPQNIILSGERGSGKTQASKQIMKYLTSRASSSCTMFDSRLRHAIYIVEAFGHAKTTLNNVSSCLIQYWELQCCQRRKHITGARISTYMLEKSRVVAQPPGQGTFLIFSWLMDGLSSEEKCGLHLNNFCAHRYVSQGMREDVSTAEHSLNKERLAALKHALNVIGFSTLEVENLFVILSAILHIGDIQFTALTEADSAFVSDLQLLEQVAGMLQVSTDELASALTTDIQYFKGDVIIRRHTIQMAAFYRDLLAKSLYSRLFGFLINTVNCCLQNQDEYKSLQTLDIGILDIFGFEEFQKNEFEQLCVNLTNEKMHHYIQEVLFLQEQTECVQEGVAMETACSPGNQAGVLDFFFQKPSGFFSLLDEESQVIWSGEPNLPRKLQGLLESSNTNAVYSPVKDGNGNVAFKGQGAAFTVMHYAGRVMYEMGGAVERNKDSLSQNLLFVMKTSENVVISHLFQSKLSQTGSLISSYPSFKFGGHKSTLLSKRTASSMVGVNKNYLELSKLLKKKGTSTFLQRLERGEPATAASQLTKSLADITAKLQRGSPHFILCIKPNTSQLPGVFDHFYVSAQLQYLGVLGLVRLFRSGYPVRPSFEDFLSRYEPLASVLLGETKGQAAEERCRLVLQRCKLQGWQIGVHKVFLKYWHVDQLSDLWLQLQRKIVTCQKVIRGFLARQHLLQRMSIKQQEVTSIKSFLQSTEDMALKTYDALVIQNASDIAREHDRLRKEVHTAYHRNRQEEGTKRAEDQGGCRHVHSNSVPVPMVVDSLAQALTGPSTRPPSLHSVFSMDDSTGLPSPRKQPPPKPKRDPNTRLSASYEAVSACLSAAKDAAGEALTRPRPHSDDYSTMKKIPPRKPKRSPHTKLSGSYEEIWGPPRPSGTMGQGGRHQAPGTLSVQWARPDSVPQCTPQLPLHLPLPQGDYDDDAEPVYIEMVGNAARAGGSETDSPDQGESVYEEMKYILPEEGCGLGMLTFLPASPPLFLETRKAIILEAAEGNCQPSKDTCDIPPPFPNLLPHRPPLLVFPPTPVTRSPASDESPLTPLEVKKLPVLETNLKYPVQSEGSSPLSPQYSKAQKGDNDQLASPGFPVFNGPSRISPPATPPPPPGPPPAPCGPPPAPCGPPPAPCGPPPAPCGPPPAPCGPPPAPCGAASASCGVAPAPCRPPTHFAFPPESVLVTAAKALTNSDLPRTQPKPSSAPVPGPCSSFVKAPYSPGKTARADLRKTSSTFSPPSPYSPPNSRPLSSPLDELASLFNSGRSVLRRSAVGRRIREAEGFETNMNLSSRDEPSSSEMASETQDRNANNHGTQLSSSLSSDVTAENGNPVTNGLAEDDGCSRLCLSGMGTSSFQRNRESHTTQVIHQLRLSENESVALQELLDWRRKLCEAREGWQEALQHPEPRAPPPPPCKKPTLLKKPEGGSCTRLPSQLWDSSM</sequence>
<keyword id="KW-0009">Actin-binding</keyword>
<keyword id="KW-0025">Alternative splicing</keyword>
<keyword id="KW-0040">ANK repeat</keyword>
<keyword id="KW-0067">ATP-binding</keyword>
<keyword id="KW-0963">Cytoplasm</keyword>
<keyword id="KW-0505">Motor protein</keyword>
<keyword id="KW-0518">Myosin</keyword>
<keyword id="KW-0547">Nucleotide-binding</keyword>
<keyword id="KW-0597">Phosphoprotein</keyword>
<keyword id="KW-1185">Reference proteome</keyword>
<keyword id="KW-0677">Repeat</keyword>
<protein>
    <recommendedName>
        <fullName>Unconventional myosin-XVI</fullName>
    </recommendedName>
    <alternativeName>
        <fullName>Neuronal tyrosine-phosphorylated phosphoinositide-3-kinase adapter 3</fullName>
    </alternativeName>
    <alternativeName>
        <fullName>Unconventional myosin-16</fullName>
    </alternativeName>
</protein>
<accession>Q5DU14</accession>
<accession>B2RX94</accession>
<accession>E1CB68</accession>
<accession>Q6GQW7</accession>
<accession>Q8BUV4</accession>
<feature type="chain" id="PRO_0000289137" description="Unconventional myosin-XVI">
    <location>
        <begin position="1"/>
        <end position="1919"/>
    </location>
</feature>
<feature type="repeat" description="ANK 1" evidence="4">
    <location>
        <begin position="59"/>
        <end position="88"/>
    </location>
</feature>
<feature type="repeat" description="ANK 2" evidence="4">
    <location>
        <begin position="92"/>
        <end position="121"/>
    </location>
</feature>
<feature type="repeat" description="ANK 3" evidence="4">
    <location>
        <begin position="125"/>
        <end position="154"/>
    </location>
</feature>
<feature type="repeat" description="ANK 4" evidence="4">
    <location>
        <begin position="158"/>
        <end position="189"/>
    </location>
</feature>
<feature type="repeat" description="ANK 5" evidence="4">
    <location>
        <begin position="191"/>
        <end position="217"/>
    </location>
</feature>
<feature type="repeat" description="ANK 6" evidence="4">
    <location>
        <begin position="221"/>
        <end position="250"/>
    </location>
</feature>
<feature type="repeat" description="ANK 7" evidence="4">
    <location>
        <begin position="254"/>
        <end position="283"/>
    </location>
</feature>
<feature type="repeat" description="ANK 8" evidence="4">
    <location>
        <begin position="287"/>
        <end position="316"/>
    </location>
</feature>
<feature type="domain" description="Myosin motor" evidence="6">
    <location>
        <begin position="400"/>
        <end position="1143"/>
    </location>
</feature>
<feature type="domain" description="IQ" evidence="5">
    <location>
        <begin position="1145"/>
        <end position="1174"/>
    </location>
</feature>
<feature type="region of interest" description="Disordered" evidence="7">
    <location>
        <begin position="371"/>
        <end position="398"/>
    </location>
</feature>
<feature type="region of interest" description="Involved in CYFIP1- and NCKAP1-binding">
    <location>
        <begin position="1109"/>
        <end position="1365"/>
    </location>
</feature>
<feature type="region of interest" description="Disordered" evidence="7">
    <location>
        <begin position="1218"/>
        <end position="1245"/>
    </location>
</feature>
<feature type="region of interest" description="Disordered" evidence="7">
    <location>
        <begin position="1259"/>
        <end position="1299"/>
    </location>
</feature>
<feature type="region of interest" description="Disordered" evidence="7">
    <location>
        <begin position="1316"/>
        <end position="1377"/>
    </location>
</feature>
<feature type="region of interest" description="Disordered" evidence="7">
    <location>
        <begin position="1544"/>
        <end position="1642"/>
    </location>
</feature>
<feature type="region of interest" description="Disordered" evidence="7">
    <location>
        <begin position="1672"/>
        <end position="1734"/>
    </location>
</feature>
<feature type="region of interest" description="Disordered" evidence="7">
    <location>
        <begin position="1759"/>
        <end position="1818"/>
    </location>
</feature>
<feature type="region of interest" description="Disordered" evidence="7">
    <location>
        <begin position="1877"/>
        <end position="1919"/>
    </location>
</feature>
<feature type="compositionally biased region" description="Basic and acidic residues" evidence="7">
    <location>
        <begin position="1218"/>
        <end position="1237"/>
    </location>
</feature>
<feature type="compositionally biased region" description="Basic residues" evidence="7">
    <location>
        <begin position="1338"/>
        <end position="1348"/>
    </location>
</feature>
<feature type="compositionally biased region" description="Polar residues" evidence="7">
    <location>
        <begin position="1547"/>
        <end position="1559"/>
    </location>
</feature>
<feature type="compositionally biased region" description="Pro residues" evidence="7">
    <location>
        <begin position="1585"/>
        <end position="1633"/>
    </location>
</feature>
<feature type="compositionally biased region" description="Polar residues" evidence="7">
    <location>
        <begin position="1672"/>
        <end position="1681"/>
    </location>
</feature>
<feature type="compositionally biased region" description="Pro residues" evidence="7">
    <location>
        <begin position="1717"/>
        <end position="1726"/>
    </location>
</feature>
<feature type="compositionally biased region" description="Polar residues" evidence="7">
    <location>
        <begin position="1776"/>
        <end position="1812"/>
    </location>
</feature>
<feature type="compositionally biased region" description="Polar residues" evidence="7">
    <location>
        <begin position="1909"/>
        <end position="1919"/>
    </location>
</feature>
<feature type="binding site" evidence="6">
    <location>
        <begin position="496"/>
        <end position="503"/>
    </location>
    <ligand>
        <name>ATP</name>
        <dbReference type="ChEBI" id="CHEBI:30616"/>
    </ligand>
</feature>
<feature type="splice variant" id="VSP_042365" description="In isoform 3." evidence="13">
    <location>
        <begin position="431"/>
        <end position="452"/>
    </location>
</feature>
<feature type="splice variant" id="VSP_052446" description="In isoform 2." evidence="12">
    <original>YVSQGMREDV</original>
    <variation>NMSSRCGQTP</variation>
    <location>
        <begin position="620"/>
        <end position="629"/>
    </location>
</feature>
<feature type="splice variant" id="VSP_042366" description="In isoform 3." evidence="13">
    <original>EVENLFVILSAILHIGDIQFTALTEADSAFVSDLQLLEQ</original>
    <variation>LCLIS</variation>
    <location>
        <begin position="657"/>
        <end position="695"/>
    </location>
</feature>
<feature type="mutagenesis site" description="Slight reduction of phosphorylation in HEK293T cells. Abolishes phosphorylation in HEK293T cells and neurons; when associated with F-1441." evidence="10">
    <original>Y</original>
    <variation>F</variation>
    <location>
        <position position="1416"/>
    </location>
</feature>
<feature type="mutagenesis site" description="Slight reduction of phosphorylation in HEK293T cells. Abolishes phosphorylation in HEK293T cells and in neurons; when associated with F-1416." evidence="10">
    <original>Y</original>
    <variation>F</variation>
    <location>
        <position position="1441"/>
    </location>
</feature>
<feature type="sequence conflict" description="In Ref. 4; BAD90419." evidence="14" ref="4">
    <original>RD</original>
    <variation>VN</variation>
    <location>
        <begin position="736"/>
        <end position="737"/>
    </location>
</feature>
<feature type="sequence conflict" description="In Ref. 4; BAD90419." evidence="14" ref="4">
    <location>
        <position position="920"/>
    </location>
</feature>
<feature type="sequence conflict" description="In Ref. 1; BAJ19140." evidence="14" ref="1">
    <original>P</original>
    <variation>H</variation>
    <location>
        <position position="1605"/>
    </location>
</feature>
<proteinExistence type="evidence at protein level"/>
<name>MYO16_MOUSE</name>
<comment type="function">
    <text evidence="1 10">Myosins are actin-based motor molecules with ATPase activity. Unconventional myosins serve in intracellular movements. Their highly divergent tails are presumed to bind to membranous compartments, which would be moved relative to actin filaments. May be involved in targeting of the catalytic subunit of protein phosphatase 1 during brain development (By similarity). Activates PI3K and concomitantly recruits the WAVE1 complex to the close vicinity of PI3K and regulates neuronal morphogenesis.</text>
</comment>
<comment type="subunit">
    <text evidence="2 3 10">Binds PPP1CA and/or PPP1CC. Binds F-actin in an ATP-sensitive manner (By similarity). Interacts with ACOT9, ARHGAP26 and PIK3R2. Interacts with components of the WAVE1 complex, CYFIP1 and NCKAP1; this interaction mediates PI3K-WAVE1 association and actin cytoskeleton remodeling (PubMed:21946561). Interacts with KIRREL3 (By similarity).</text>
</comment>
<comment type="interaction">
    <interactant intactId="EBI-7448308">
        <id>Q5DU14</id>
    </interactant>
    <interactant intactId="EBI-771576">
        <id>P28660</id>
        <label>Nckap1</label>
    </interactant>
    <organismsDiffer>false</organismsDiffer>
    <experiments>2</experiments>
</comment>
<comment type="subcellular location">
    <subcellularLocation>
        <location evidence="2">Cytoplasm</location>
    </subcellularLocation>
    <text evidence="2">Found in puncta in soma and processes of astrocytes and dissociated cerebellar cells with the morphology of migrating granule cells.</text>
</comment>
<comment type="alternative products">
    <event type="alternative splicing"/>
    <isoform>
        <id>Q5DU14-1</id>
        <name evidence="9 11">1</name>
        <sequence type="displayed"/>
    </isoform>
    <isoform>
        <id>Q5DU14-2</id>
        <name evidence="8">2</name>
        <sequence type="described" ref="VSP_052446"/>
    </isoform>
    <isoform>
        <id>Q5DU14-3</id>
        <name>3</name>
        <sequence type="described" ref="VSP_042365 VSP_042366"/>
    </isoform>
</comment>
<comment type="tissue specificity">
    <text evidence="10">Expressed predominantly in brain where it is present in the neurons, but not in astrocytes or oligodendrites.</text>
</comment>
<comment type="developmental stage">
    <text evidence="10">At postnatal day 1, highly expressed in upper neocortex and also detected in the olfactory bulb, but not in the striatum.</text>
</comment>
<comment type="PTM">
    <text evidence="10">Phosphorylated on tyrosine residues by FYN upon stimulation with CNTN5. Phosphorylation begins at 14 dpc, reaches a peak during perinatal days in brain, then gradually decreases.</text>
</comment>
<comment type="disruption phenotype">
    <text evidence="10">Triple knockout mice NYAP1/NYAP2/MYO16 are fertile and appear healthy. However, compared to wild-type mice they show a clear reduction in brain size, exhibiting a reduction in the size of the cortex and striatum, but not the olfactory bulb or corpus callosum. The total neurite length of neurons in these mice is also significantly shorter.</text>
</comment>
<comment type="similarity">
    <text evidence="14">In the N-terminal section; belongs to the TRAFAC class myosin-kinesin ATPase superfamily. Myosin family.</text>
</comment>
<comment type="similarity">
    <text evidence="14">In the C-terminal section; belongs to the NYAP family.</text>
</comment>
<gene>
    <name evidence="18" type="primary">Myo16</name>
    <name evidence="17" type="synonym">Kiaa0865</name>
    <name type="synonym">Nyap3</name>
</gene>
<dbReference type="EMBL" id="AB429291">
    <property type="protein sequence ID" value="BAJ19140.1"/>
    <property type="molecule type" value="mRNA"/>
</dbReference>
<dbReference type="EMBL" id="BC072580">
    <property type="protein sequence ID" value="AAH72580.1"/>
    <property type="molecule type" value="mRNA"/>
</dbReference>
<dbReference type="EMBL" id="BC151049">
    <property type="protein sequence ID" value="AAI51050.1"/>
    <property type="molecule type" value="mRNA"/>
</dbReference>
<dbReference type="EMBL" id="BC151051">
    <property type="protein sequence ID" value="AAI51052.1"/>
    <property type="molecule type" value="mRNA"/>
</dbReference>
<dbReference type="EMBL" id="BC157966">
    <property type="protein sequence ID" value="AAI57967.1"/>
    <property type="molecule type" value="mRNA"/>
</dbReference>
<dbReference type="EMBL" id="BC172122">
    <property type="protein sequence ID" value="AAI72122.1"/>
    <property type="molecule type" value="mRNA"/>
</dbReference>
<dbReference type="EMBL" id="AK082350">
    <property type="protein sequence ID" value="BAC38475.1"/>
    <property type="molecule type" value="mRNA"/>
</dbReference>
<dbReference type="EMBL" id="AK220356">
    <property type="protein sequence ID" value="BAD90419.1"/>
    <property type="molecule type" value="Transcribed_RNA"/>
</dbReference>
<dbReference type="CCDS" id="CCDS40218.2">
    <molecule id="Q5DU14-1"/>
</dbReference>
<dbReference type="RefSeq" id="NP_001306080.1">
    <molecule id="Q5DU14-1"/>
    <property type="nucleotide sequence ID" value="NM_001319151.1"/>
</dbReference>
<dbReference type="RefSeq" id="XP_006508842.1">
    <molecule id="Q5DU14-1"/>
    <property type="nucleotide sequence ID" value="XM_006508779.4"/>
</dbReference>
<dbReference type="SMR" id="Q5DU14"/>
<dbReference type="BioGRID" id="232633">
    <property type="interactions" value="8"/>
</dbReference>
<dbReference type="FunCoup" id="Q5DU14">
    <property type="interactions" value="513"/>
</dbReference>
<dbReference type="IntAct" id="Q5DU14">
    <property type="interactions" value="4"/>
</dbReference>
<dbReference type="MINT" id="Q5DU14"/>
<dbReference type="STRING" id="10090.ENSMUSP00000146677"/>
<dbReference type="GlyGen" id="Q5DU14">
    <property type="glycosylation" value="3 sites, 1 N-linked glycan (1 site)"/>
</dbReference>
<dbReference type="iPTMnet" id="Q5DU14"/>
<dbReference type="PhosphoSitePlus" id="Q5DU14"/>
<dbReference type="PaxDb" id="10090-ENSMUSP00000049345"/>
<dbReference type="ProteomicsDB" id="286121">
    <molecule id="Q5DU14-1"/>
</dbReference>
<dbReference type="ProteomicsDB" id="286122">
    <molecule id="Q5DU14-2"/>
</dbReference>
<dbReference type="ProteomicsDB" id="286123">
    <molecule id="Q5DU14-3"/>
</dbReference>
<dbReference type="Antibodypedia" id="42542">
    <property type="antibodies" value="76 antibodies from 20 providers"/>
</dbReference>
<dbReference type="Ensembl" id="ENSMUST00000207204.2">
    <molecule id="Q5DU14-3"/>
    <property type="protein sequence ID" value="ENSMUSP00000146796.2"/>
    <property type="gene ID" value="ENSMUSG00000039057.12"/>
</dbReference>
<dbReference type="Ensembl" id="ENSMUST00000207477.2">
    <molecule id="Q5DU14-1"/>
    <property type="protein sequence ID" value="ENSMUSP00000146677.2"/>
    <property type="gene ID" value="ENSMUSG00000039057.12"/>
</dbReference>
<dbReference type="GeneID" id="244281"/>
<dbReference type="KEGG" id="mmu:244281"/>
<dbReference type="UCSC" id="uc009kus.2">
    <molecule id="Q5DU14-1"/>
    <property type="organism name" value="mouse"/>
</dbReference>
<dbReference type="UCSC" id="uc012fzh.1">
    <molecule id="Q5DU14-3"/>
    <property type="organism name" value="mouse"/>
</dbReference>
<dbReference type="AGR" id="MGI:2685951"/>
<dbReference type="CTD" id="23026"/>
<dbReference type="MGI" id="MGI:2685951">
    <property type="gene designation" value="Myo16"/>
</dbReference>
<dbReference type="VEuPathDB" id="HostDB:ENSMUSG00000039057"/>
<dbReference type="eggNOG" id="KOG0160">
    <property type="taxonomic scope" value="Eukaryota"/>
</dbReference>
<dbReference type="eggNOG" id="KOG1082">
    <property type="taxonomic scope" value="Eukaryota"/>
</dbReference>
<dbReference type="GeneTree" id="ENSGT00940000158920"/>
<dbReference type="InParanoid" id="Q5DU14"/>
<dbReference type="OMA" id="GPRHFHC"/>
<dbReference type="OrthoDB" id="9935913at2759"/>
<dbReference type="PhylomeDB" id="Q5DU14"/>
<dbReference type="BioGRID-ORCS" id="244281">
    <property type="hits" value="3 hits in 76 CRISPR screens"/>
</dbReference>
<dbReference type="ChiTaRS" id="Myo16">
    <property type="organism name" value="mouse"/>
</dbReference>
<dbReference type="PRO" id="PR:Q5DU14"/>
<dbReference type="Proteomes" id="UP000000589">
    <property type="component" value="Chromosome 8"/>
</dbReference>
<dbReference type="RNAct" id="Q5DU14">
    <property type="molecule type" value="protein"/>
</dbReference>
<dbReference type="Bgee" id="ENSMUSG00000039057">
    <property type="expression patterns" value="Expressed in habenula and 89 other cell types or tissues"/>
</dbReference>
<dbReference type="ExpressionAtlas" id="Q5DU14">
    <property type="expression patterns" value="baseline and differential"/>
</dbReference>
<dbReference type="GO" id="GO:0005737">
    <property type="term" value="C:cytoplasm"/>
    <property type="evidence" value="ECO:0000250"/>
    <property type="project" value="HGNC-UCL"/>
</dbReference>
<dbReference type="GO" id="GO:0016459">
    <property type="term" value="C:myosin complex"/>
    <property type="evidence" value="ECO:0007669"/>
    <property type="project" value="UniProtKB-KW"/>
</dbReference>
<dbReference type="GO" id="GO:0005654">
    <property type="term" value="C:nucleoplasm"/>
    <property type="evidence" value="ECO:0000250"/>
    <property type="project" value="HGNC-UCL"/>
</dbReference>
<dbReference type="GO" id="GO:0048471">
    <property type="term" value="C:perinuclear region of cytoplasm"/>
    <property type="evidence" value="ECO:0000250"/>
    <property type="project" value="HGNC-UCL"/>
</dbReference>
<dbReference type="GO" id="GO:0005886">
    <property type="term" value="C:plasma membrane"/>
    <property type="evidence" value="ECO:0000250"/>
    <property type="project" value="HGNC-UCL"/>
</dbReference>
<dbReference type="GO" id="GO:0051015">
    <property type="term" value="F:actin filament binding"/>
    <property type="evidence" value="ECO:0000250"/>
    <property type="project" value="HGNC-UCL"/>
</dbReference>
<dbReference type="GO" id="GO:0005524">
    <property type="term" value="F:ATP binding"/>
    <property type="evidence" value="ECO:0007669"/>
    <property type="project" value="UniProtKB-KW"/>
</dbReference>
<dbReference type="GO" id="GO:0003774">
    <property type="term" value="F:cytoskeletal motor activity"/>
    <property type="evidence" value="ECO:0007669"/>
    <property type="project" value="InterPro"/>
</dbReference>
<dbReference type="GO" id="GO:0021549">
    <property type="term" value="P:cerebellum development"/>
    <property type="evidence" value="ECO:0000250"/>
    <property type="project" value="HGNC-UCL"/>
</dbReference>
<dbReference type="GO" id="GO:0008285">
    <property type="term" value="P:negative regulation of cell population proliferation"/>
    <property type="evidence" value="ECO:0000250"/>
    <property type="project" value="HGNC-UCL"/>
</dbReference>
<dbReference type="GO" id="GO:2000134">
    <property type="term" value="P:negative regulation of G1/S transition of mitotic cell cycle"/>
    <property type="evidence" value="ECO:0000250"/>
    <property type="project" value="HGNC"/>
</dbReference>
<dbReference type="GO" id="GO:0048812">
    <property type="term" value="P:neuron projection morphogenesis"/>
    <property type="evidence" value="ECO:0000314"/>
    <property type="project" value="UniProtKB"/>
</dbReference>
<dbReference type="GO" id="GO:0043491">
    <property type="term" value="P:phosphatidylinositol 3-kinase/protein kinase B signal transduction"/>
    <property type="evidence" value="ECO:0000314"/>
    <property type="project" value="UniProtKB"/>
</dbReference>
<dbReference type="CDD" id="cd14878">
    <property type="entry name" value="MYSc_Myo16"/>
    <property type="match status" value="1"/>
</dbReference>
<dbReference type="FunFam" id="1.25.40.20:FF:000168">
    <property type="entry name" value="Myosin XVI"/>
    <property type="match status" value="1"/>
</dbReference>
<dbReference type="FunFam" id="1.25.40.20:FF:000100">
    <property type="entry name" value="unconventional myosin-XVI"/>
    <property type="match status" value="1"/>
</dbReference>
<dbReference type="Gene3D" id="1.10.10.820">
    <property type="match status" value="1"/>
</dbReference>
<dbReference type="Gene3D" id="1.20.5.4820">
    <property type="match status" value="1"/>
</dbReference>
<dbReference type="Gene3D" id="1.20.58.530">
    <property type="match status" value="1"/>
</dbReference>
<dbReference type="Gene3D" id="1.25.40.20">
    <property type="entry name" value="Ankyrin repeat-containing domain"/>
    <property type="match status" value="2"/>
</dbReference>
<dbReference type="Gene3D" id="3.40.850.10">
    <property type="entry name" value="Kinesin motor domain"/>
    <property type="match status" value="1"/>
</dbReference>
<dbReference type="Gene3D" id="1.20.120.720">
    <property type="entry name" value="Myosin VI head, motor domain, U50 subdomain"/>
    <property type="match status" value="1"/>
</dbReference>
<dbReference type="InterPro" id="IPR002110">
    <property type="entry name" value="Ankyrin_rpt"/>
</dbReference>
<dbReference type="InterPro" id="IPR036770">
    <property type="entry name" value="Ankyrin_rpt-contain_sf"/>
</dbReference>
<dbReference type="InterPro" id="IPR036961">
    <property type="entry name" value="Kinesin_motor_dom_sf"/>
</dbReference>
<dbReference type="InterPro" id="IPR052838">
    <property type="entry name" value="Myosin-XVI"/>
</dbReference>
<dbReference type="InterPro" id="IPR001609">
    <property type="entry name" value="Myosin_head_motor_dom-like"/>
</dbReference>
<dbReference type="InterPro" id="IPR036042">
    <property type="entry name" value="MYSc_Myo16"/>
</dbReference>
<dbReference type="InterPro" id="IPR039482">
    <property type="entry name" value="NYAP_N"/>
</dbReference>
<dbReference type="InterPro" id="IPR027417">
    <property type="entry name" value="P-loop_NTPase"/>
</dbReference>
<dbReference type="PANTHER" id="PTHR47335">
    <property type="entry name" value="UNCONVENTIONAL MYOSIN-XVI"/>
    <property type="match status" value="1"/>
</dbReference>
<dbReference type="PANTHER" id="PTHR47335:SF1">
    <property type="entry name" value="UNCONVENTIONAL MYOSIN-XVI"/>
    <property type="match status" value="1"/>
</dbReference>
<dbReference type="Pfam" id="PF12796">
    <property type="entry name" value="Ank_2"/>
    <property type="match status" value="2"/>
</dbReference>
<dbReference type="Pfam" id="PF00063">
    <property type="entry name" value="Myosin_head"/>
    <property type="match status" value="1"/>
</dbReference>
<dbReference type="Pfam" id="PF15439">
    <property type="entry name" value="NYAP_N"/>
    <property type="match status" value="1"/>
</dbReference>
<dbReference type="PRINTS" id="PR00193">
    <property type="entry name" value="MYOSINHEAVY"/>
</dbReference>
<dbReference type="SMART" id="SM00248">
    <property type="entry name" value="ANK"/>
    <property type="match status" value="5"/>
</dbReference>
<dbReference type="SMART" id="SM00242">
    <property type="entry name" value="MYSc"/>
    <property type="match status" value="1"/>
</dbReference>
<dbReference type="SUPFAM" id="SSF48403">
    <property type="entry name" value="Ankyrin repeat"/>
    <property type="match status" value="1"/>
</dbReference>
<dbReference type="SUPFAM" id="SSF52540">
    <property type="entry name" value="P-loop containing nucleoside triphosphate hydrolases"/>
    <property type="match status" value="1"/>
</dbReference>
<dbReference type="PROSITE" id="PS50297">
    <property type="entry name" value="ANK_REP_REGION"/>
    <property type="match status" value="1"/>
</dbReference>
<dbReference type="PROSITE" id="PS50088">
    <property type="entry name" value="ANK_REPEAT"/>
    <property type="match status" value="4"/>
</dbReference>
<dbReference type="PROSITE" id="PS50096">
    <property type="entry name" value="IQ"/>
    <property type="match status" value="1"/>
</dbReference>
<dbReference type="PROSITE" id="PS51456">
    <property type="entry name" value="MYOSIN_MOTOR"/>
    <property type="match status" value="1"/>
</dbReference>
<organism>
    <name type="scientific">Mus musculus</name>
    <name type="common">Mouse</name>
    <dbReference type="NCBI Taxonomy" id="10090"/>
    <lineage>
        <taxon>Eukaryota</taxon>
        <taxon>Metazoa</taxon>
        <taxon>Chordata</taxon>
        <taxon>Craniata</taxon>
        <taxon>Vertebrata</taxon>
        <taxon>Euteleostomi</taxon>
        <taxon>Mammalia</taxon>
        <taxon>Eutheria</taxon>
        <taxon>Euarchontoglires</taxon>
        <taxon>Glires</taxon>
        <taxon>Rodentia</taxon>
        <taxon>Myomorpha</taxon>
        <taxon>Muroidea</taxon>
        <taxon>Muridae</taxon>
        <taxon>Murinae</taxon>
        <taxon>Mus</taxon>
        <taxon>Mus</taxon>
    </lineage>
</organism>